<dbReference type="EC" id="2.1.1.172" evidence="1"/>
<dbReference type="EMBL" id="CP001172">
    <property type="protein sequence ID" value="ACJ57769.1"/>
    <property type="molecule type" value="Genomic_DNA"/>
</dbReference>
<dbReference type="RefSeq" id="WP_000371532.1">
    <property type="nucleotide sequence ID" value="NZ_CP001172.1"/>
</dbReference>
<dbReference type="SMR" id="B7GWT8"/>
<dbReference type="HOGENOM" id="CLU_049581_0_0_6"/>
<dbReference type="Proteomes" id="UP000006924">
    <property type="component" value="Chromosome"/>
</dbReference>
<dbReference type="GO" id="GO:0005737">
    <property type="term" value="C:cytoplasm"/>
    <property type="evidence" value="ECO:0007669"/>
    <property type="project" value="UniProtKB-SubCell"/>
</dbReference>
<dbReference type="GO" id="GO:0052914">
    <property type="term" value="F:16S rRNA (guanine(1207)-N(2))-methyltransferase activity"/>
    <property type="evidence" value="ECO:0007669"/>
    <property type="project" value="UniProtKB-EC"/>
</dbReference>
<dbReference type="GO" id="GO:0003676">
    <property type="term" value="F:nucleic acid binding"/>
    <property type="evidence" value="ECO:0007669"/>
    <property type="project" value="InterPro"/>
</dbReference>
<dbReference type="CDD" id="cd02440">
    <property type="entry name" value="AdoMet_MTases"/>
    <property type="match status" value="1"/>
</dbReference>
<dbReference type="Gene3D" id="3.40.50.150">
    <property type="entry name" value="Vaccinia Virus protein VP39"/>
    <property type="match status" value="2"/>
</dbReference>
<dbReference type="HAMAP" id="MF_01862">
    <property type="entry name" value="16SrRNA_methyltr_C"/>
    <property type="match status" value="1"/>
</dbReference>
<dbReference type="InterPro" id="IPR002052">
    <property type="entry name" value="DNA_methylase_N6_adenine_CS"/>
</dbReference>
<dbReference type="InterPro" id="IPR013675">
    <property type="entry name" value="Mtase_sm_N"/>
</dbReference>
<dbReference type="InterPro" id="IPR023543">
    <property type="entry name" value="rRNA_ssu_MeTfrase_C"/>
</dbReference>
<dbReference type="InterPro" id="IPR046977">
    <property type="entry name" value="RsmC/RlmG"/>
</dbReference>
<dbReference type="InterPro" id="IPR029063">
    <property type="entry name" value="SAM-dependent_MTases_sf"/>
</dbReference>
<dbReference type="InterPro" id="IPR007848">
    <property type="entry name" value="Small_mtfrase_dom"/>
</dbReference>
<dbReference type="PANTHER" id="PTHR47816">
    <property type="entry name" value="RIBOSOMAL RNA SMALL SUBUNIT METHYLTRANSFERASE C"/>
    <property type="match status" value="1"/>
</dbReference>
<dbReference type="PANTHER" id="PTHR47816:SF4">
    <property type="entry name" value="RIBOSOMAL RNA SMALL SUBUNIT METHYLTRANSFERASE C"/>
    <property type="match status" value="1"/>
</dbReference>
<dbReference type="Pfam" id="PF05175">
    <property type="entry name" value="MTS"/>
    <property type="match status" value="1"/>
</dbReference>
<dbReference type="Pfam" id="PF08468">
    <property type="entry name" value="MTS_N"/>
    <property type="match status" value="1"/>
</dbReference>
<dbReference type="SUPFAM" id="SSF53335">
    <property type="entry name" value="S-adenosyl-L-methionine-dependent methyltransferases"/>
    <property type="match status" value="1"/>
</dbReference>
<protein>
    <recommendedName>
        <fullName evidence="1">Ribosomal RNA small subunit methyltransferase C</fullName>
        <ecNumber evidence="1">2.1.1.172</ecNumber>
    </recommendedName>
    <alternativeName>
        <fullName evidence="1">16S rRNA m2G1207 methyltransferase</fullName>
    </alternativeName>
    <alternativeName>
        <fullName evidence="1">rRNA (guanine-N(2)-)-methyltransferase RsmC</fullName>
    </alternativeName>
</protein>
<organism>
    <name type="scientific">Acinetobacter baumannii (strain AB307-0294)</name>
    <dbReference type="NCBI Taxonomy" id="557600"/>
    <lineage>
        <taxon>Bacteria</taxon>
        <taxon>Pseudomonadati</taxon>
        <taxon>Pseudomonadota</taxon>
        <taxon>Gammaproteobacteria</taxon>
        <taxon>Moraxellales</taxon>
        <taxon>Moraxellaceae</taxon>
        <taxon>Acinetobacter</taxon>
        <taxon>Acinetobacter calcoaceticus/baumannii complex</taxon>
    </lineage>
</organism>
<sequence length="337" mass="37456">MDPRSEVILRQQDYLKGRVLLINAPNDALVSQLPTEIDASVWTWNYADYQGFVNTGTPAHFSVEFPSQEFDQAIIFVPKSKELLNYILHVVMSHLKTDQSVFLVGEKKGGVERAAKQLQNFGTILKLDSARHCQLWHLKIEKIEKIKPLESWLKTYTVQVNGQELTICALPGVFSQTHLDVGTAVLLPYLNQVKSGRIADFGCGAGIISCYLAKANSSNIIHALDIDAFALQSTEMTFSRNGIGSDQLRLQPVTGIADAPTELDAIVSNPPFHQGIHTNYDASEGLCQNAKKHLKASGELWIVANRFLNYPILIEKHFGQCEIKTDLQGFKVLYACA</sequence>
<comment type="function">
    <text evidence="1">Specifically methylates the guanine in position 1207 of 16S rRNA in the 30S particle.</text>
</comment>
<comment type="catalytic activity">
    <reaction evidence="1">
        <text>guanosine(1207) in 16S rRNA + S-adenosyl-L-methionine = N(2)-methylguanosine(1207) in 16S rRNA + S-adenosyl-L-homocysteine + H(+)</text>
        <dbReference type="Rhea" id="RHEA:42736"/>
        <dbReference type="Rhea" id="RHEA-COMP:10213"/>
        <dbReference type="Rhea" id="RHEA-COMP:10214"/>
        <dbReference type="ChEBI" id="CHEBI:15378"/>
        <dbReference type="ChEBI" id="CHEBI:57856"/>
        <dbReference type="ChEBI" id="CHEBI:59789"/>
        <dbReference type="ChEBI" id="CHEBI:74269"/>
        <dbReference type="ChEBI" id="CHEBI:74481"/>
        <dbReference type="EC" id="2.1.1.172"/>
    </reaction>
</comment>
<comment type="subunit">
    <text evidence="1">Monomer.</text>
</comment>
<comment type="subcellular location">
    <subcellularLocation>
        <location evidence="1">Cytoplasm</location>
    </subcellularLocation>
</comment>
<comment type="similarity">
    <text evidence="1">Belongs to the methyltransferase superfamily. RsmC family.</text>
</comment>
<reference key="1">
    <citation type="journal article" date="2008" name="J. Bacteriol.">
        <title>Comparative genome sequence analysis of multidrug-resistant Acinetobacter baumannii.</title>
        <authorList>
            <person name="Adams M.D."/>
            <person name="Goglin K."/>
            <person name="Molyneaux N."/>
            <person name="Hujer K.M."/>
            <person name="Lavender H."/>
            <person name="Jamison J.J."/>
            <person name="MacDonald I.J."/>
            <person name="Martin K.M."/>
            <person name="Russo T."/>
            <person name="Campagnari A.A."/>
            <person name="Hujer A.M."/>
            <person name="Bonomo R.A."/>
            <person name="Gill S.R."/>
        </authorList>
    </citation>
    <scope>NUCLEOTIDE SEQUENCE [LARGE SCALE GENOMIC DNA]</scope>
    <source>
        <strain>AB307-0294</strain>
    </source>
</reference>
<keyword id="KW-0963">Cytoplasm</keyword>
<keyword id="KW-0489">Methyltransferase</keyword>
<keyword id="KW-0698">rRNA processing</keyword>
<keyword id="KW-0949">S-adenosyl-L-methionine</keyword>
<keyword id="KW-0808">Transferase</keyword>
<accession>B7GWT8</accession>
<proteinExistence type="inferred from homology"/>
<name>RSMC_ACIB3</name>
<feature type="chain" id="PRO_0000369675" description="Ribosomal RNA small subunit methyltransferase C">
    <location>
        <begin position="1"/>
        <end position="337"/>
    </location>
</feature>
<gene>
    <name evidence="1" type="primary">rsmC</name>
    <name type="ordered locus">ABBFA_000625</name>
</gene>
<evidence type="ECO:0000255" key="1">
    <source>
        <dbReference type="HAMAP-Rule" id="MF_01862"/>
    </source>
</evidence>